<organism>
    <name type="scientific">Escherichia coli (strain ATCC 8739 / DSM 1576 / NBRC 3972 / NCIMB 8545 / WDCM 00012 / Crooks)</name>
    <dbReference type="NCBI Taxonomy" id="481805"/>
    <lineage>
        <taxon>Bacteria</taxon>
        <taxon>Pseudomonadati</taxon>
        <taxon>Pseudomonadota</taxon>
        <taxon>Gammaproteobacteria</taxon>
        <taxon>Enterobacterales</taxon>
        <taxon>Enterobacteriaceae</taxon>
        <taxon>Escherichia</taxon>
    </lineage>
</organism>
<proteinExistence type="inferred from homology"/>
<gene>
    <name evidence="1" type="primary">maeA</name>
    <name type="ordered locus">EcolC_2178</name>
</gene>
<reference key="1">
    <citation type="submission" date="2008-02" db="EMBL/GenBank/DDBJ databases">
        <title>Complete sequence of Escherichia coli C str. ATCC 8739.</title>
        <authorList>
            <person name="Copeland A."/>
            <person name="Lucas S."/>
            <person name="Lapidus A."/>
            <person name="Glavina del Rio T."/>
            <person name="Dalin E."/>
            <person name="Tice H."/>
            <person name="Bruce D."/>
            <person name="Goodwin L."/>
            <person name="Pitluck S."/>
            <person name="Kiss H."/>
            <person name="Brettin T."/>
            <person name="Detter J.C."/>
            <person name="Han C."/>
            <person name="Kuske C.R."/>
            <person name="Schmutz J."/>
            <person name="Larimer F."/>
            <person name="Land M."/>
            <person name="Hauser L."/>
            <person name="Kyrpides N."/>
            <person name="Mikhailova N."/>
            <person name="Ingram L."/>
            <person name="Richardson P."/>
        </authorList>
    </citation>
    <scope>NUCLEOTIDE SEQUENCE [LARGE SCALE GENOMIC DNA]</scope>
    <source>
        <strain>ATCC 8739 / DSM 1576 / NBRC 3972 / NCIMB 8545 / WDCM 00012 / Crooks</strain>
    </source>
</reference>
<dbReference type="EC" id="1.1.1.38" evidence="1"/>
<dbReference type="EMBL" id="CP000946">
    <property type="protein sequence ID" value="ACA77817.1"/>
    <property type="molecule type" value="Genomic_DNA"/>
</dbReference>
<dbReference type="RefSeq" id="WP_000433465.1">
    <property type="nucleotide sequence ID" value="NZ_MTFT01000036.1"/>
</dbReference>
<dbReference type="SMR" id="B1IRX9"/>
<dbReference type="KEGG" id="ecl:EcolC_2178"/>
<dbReference type="HOGENOM" id="CLU_011405_5_2_6"/>
<dbReference type="GO" id="GO:0005829">
    <property type="term" value="C:cytosol"/>
    <property type="evidence" value="ECO:0007669"/>
    <property type="project" value="TreeGrafter"/>
</dbReference>
<dbReference type="GO" id="GO:0004471">
    <property type="term" value="F:malate dehydrogenase (decarboxylating) (NAD+) activity"/>
    <property type="evidence" value="ECO:0007669"/>
    <property type="project" value="UniProtKB-UniRule"/>
</dbReference>
<dbReference type="GO" id="GO:0046872">
    <property type="term" value="F:metal ion binding"/>
    <property type="evidence" value="ECO:0007669"/>
    <property type="project" value="UniProtKB-KW"/>
</dbReference>
<dbReference type="GO" id="GO:0051287">
    <property type="term" value="F:NAD binding"/>
    <property type="evidence" value="ECO:0007669"/>
    <property type="project" value="InterPro"/>
</dbReference>
<dbReference type="GO" id="GO:0008948">
    <property type="term" value="F:oxaloacetate decarboxylase activity"/>
    <property type="evidence" value="ECO:0007669"/>
    <property type="project" value="UniProtKB-UniRule"/>
</dbReference>
<dbReference type="GO" id="GO:0006108">
    <property type="term" value="P:malate metabolic process"/>
    <property type="evidence" value="ECO:0007669"/>
    <property type="project" value="TreeGrafter"/>
</dbReference>
<dbReference type="CDD" id="cd05312">
    <property type="entry name" value="NAD_bind_1_malic_enz"/>
    <property type="match status" value="1"/>
</dbReference>
<dbReference type="FunFam" id="3.40.50.10380:FF:000001">
    <property type="entry name" value="NAD-dependent malic enzyme"/>
    <property type="match status" value="1"/>
</dbReference>
<dbReference type="FunFam" id="3.40.50.720:FF:000055">
    <property type="entry name" value="NAD-dependent malic enzyme"/>
    <property type="match status" value="1"/>
</dbReference>
<dbReference type="Gene3D" id="3.40.50.10380">
    <property type="entry name" value="Malic enzyme, N-terminal domain"/>
    <property type="match status" value="1"/>
</dbReference>
<dbReference type="Gene3D" id="3.40.50.720">
    <property type="entry name" value="NAD(P)-binding Rossmann-like Domain"/>
    <property type="match status" value="1"/>
</dbReference>
<dbReference type="HAMAP" id="MF_01619">
    <property type="entry name" value="NAD_malic_enz"/>
    <property type="match status" value="1"/>
</dbReference>
<dbReference type="InterPro" id="IPR046346">
    <property type="entry name" value="Aminoacid_DH-like_N_sf"/>
</dbReference>
<dbReference type="InterPro" id="IPR015884">
    <property type="entry name" value="Malic_enzyme_CS"/>
</dbReference>
<dbReference type="InterPro" id="IPR012301">
    <property type="entry name" value="Malic_N_dom"/>
</dbReference>
<dbReference type="InterPro" id="IPR037062">
    <property type="entry name" value="Malic_N_dom_sf"/>
</dbReference>
<dbReference type="InterPro" id="IPR012302">
    <property type="entry name" value="Malic_NAD-bd"/>
</dbReference>
<dbReference type="InterPro" id="IPR001891">
    <property type="entry name" value="Malic_OxRdtase"/>
</dbReference>
<dbReference type="InterPro" id="IPR036291">
    <property type="entry name" value="NAD(P)-bd_dom_sf"/>
</dbReference>
<dbReference type="InterPro" id="IPR023667">
    <property type="entry name" value="NAD_malic_enz_proteobac"/>
</dbReference>
<dbReference type="NCBIfam" id="NF010052">
    <property type="entry name" value="PRK13529.1"/>
    <property type="match status" value="1"/>
</dbReference>
<dbReference type="PANTHER" id="PTHR23406">
    <property type="entry name" value="MALIC ENZYME-RELATED"/>
    <property type="match status" value="1"/>
</dbReference>
<dbReference type="PANTHER" id="PTHR23406:SF34">
    <property type="entry name" value="NAD-DEPENDENT MALIC ENZYME, MITOCHONDRIAL"/>
    <property type="match status" value="1"/>
</dbReference>
<dbReference type="Pfam" id="PF00390">
    <property type="entry name" value="malic"/>
    <property type="match status" value="1"/>
</dbReference>
<dbReference type="Pfam" id="PF03949">
    <property type="entry name" value="Malic_M"/>
    <property type="match status" value="1"/>
</dbReference>
<dbReference type="PIRSF" id="PIRSF000106">
    <property type="entry name" value="ME"/>
    <property type="match status" value="1"/>
</dbReference>
<dbReference type="PRINTS" id="PR00072">
    <property type="entry name" value="MALOXRDTASE"/>
</dbReference>
<dbReference type="SMART" id="SM01274">
    <property type="entry name" value="malic"/>
    <property type="match status" value="1"/>
</dbReference>
<dbReference type="SMART" id="SM00919">
    <property type="entry name" value="Malic_M"/>
    <property type="match status" value="1"/>
</dbReference>
<dbReference type="SUPFAM" id="SSF53223">
    <property type="entry name" value="Aminoacid dehydrogenase-like, N-terminal domain"/>
    <property type="match status" value="1"/>
</dbReference>
<dbReference type="SUPFAM" id="SSF51735">
    <property type="entry name" value="NAD(P)-binding Rossmann-fold domains"/>
    <property type="match status" value="1"/>
</dbReference>
<dbReference type="PROSITE" id="PS00331">
    <property type="entry name" value="MALIC_ENZYMES"/>
    <property type="match status" value="1"/>
</dbReference>
<keyword id="KW-0479">Metal-binding</keyword>
<keyword id="KW-0520">NAD</keyword>
<keyword id="KW-0560">Oxidoreductase</keyword>
<name>MAO1_ECOLC</name>
<sequence>MEPKTKKQRSLYIPYAGPVLLEFPLLNKGSAFSMEERRNFNLLGLLPEVVETIEEQAERAWIQYQGFKTEIDKHIYLRNIQDTNETLFYRLVNNHLDEMMPVIYTPTVGAACERFSEIYRRSRGVFISYQNRHNMDDILQNVPNHNIKVIVVTDGERILGLGDQGIGGMGIPIGKLSLYTACGGISPAYTLPVVLDVGTNNQQLLNDPLYMGWRNPRITDDEYYEFVDEFIQAVKQRWPDVLLQFEDFAQKNAMPLLNRYRNEICSFNDDIQGTAAVTVGTLIAASRAAGGQLSEKKIVFLGAGSAGCGIAEMIIAQTQREGLSEEAARQKVFMVDRFGLLTDKMPNLLPFQTKLVQKRENLSDWDTDSDVLSLLDVVRNVKPDILIGVSGQTGLFTEEIIREMHKHCPRPIVMPLSNPTSRVEATPQDIIAWTEGNALVATGSPFNPVVWKDKIYPIAQCNNAFIFPGIGLGVIASGASRITDEMLMSASETLAQYSPLVLNGEGMVLPELKDIQKVSRAIAFAVGKMAQQQGVAVKTSAEALQQAIDDNFWQAEYRDYRRTSI</sequence>
<comment type="catalytic activity">
    <reaction evidence="1">
        <text>(S)-malate + NAD(+) = pyruvate + CO2 + NADH</text>
        <dbReference type="Rhea" id="RHEA:12653"/>
        <dbReference type="ChEBI" id="CHEBI:15361"/>
        <dbReference type="ChEBI" id="CHEBI:15589"/>
        <dbReference type="ChEBI" id="CHEBI:16526"/>
        <dbReference type="ChEBI" id="CHEBI:57540"/>
        <dbReference type="ChEBI" id="CHEBI:57945"/>
        <dbReference type="EC" id="1.1.1.38"/>
    </reaction>
</comment>
<comment type="catalytic activity">
    <reaction evidence="1">
        <text>oxaloacetate + H(+) = pyruvate + CO2</text>
        <dbReference type="Rhea" id="RHEA:15641"/>
        <dbReference type="ChEBI" id="CHEBI:15361"/>
        <dbReference type="ChEBI" id="CHEBI:15378"/>
        <dbReference type="ChEBI" id="CHEBI:16452"/>
        <dbReference type="ChEBI" id="CHEBI:16526"/>
        <dbReference type="EC" id="1.1.1.38"/>
    </reaction>
</comment>
<comment type="cofactor">
    <cofactor evidence="1">
        <name>Mg(2+)</name>
        <dbReference type="ChEBI" id="CHEBI:18420"/>
    </cofactor>
    <cofactor evidence="1">
        <name>Mn(2+)</name>
        <dbReference type="ChEBI" id="CHEBI:29035"/>
    </cofactor>
    <text evidence="1">Divalent metal cations. Prefers magnesium or manganese.</text>
</comment>
<comment type="subunit">
    <text evidence="1">Homotetramer.</text>
</comment>
<comment type="similarity">
    <text evidence="1">Belongs to the malic enzymes family.</text>
</comment>
<feature type="chain" id="PRO_1000088071" description="NAD-dependent malic enzyme">
    <location>
        <begin position="1"/>
        <end position="565"/>
    </location>
</feature>
<feature type="active site" description="Proton donor" evidence="1">
    <location>
        <position position="104"/>
    </location>
</feature>
<feature type="active site" description="Proton acceptor" evidence="1">
    <location>
        <position position="175"/>
    </location>
</feature>
<feature type="binding site" evidence="1">
    <location>
        <position position="157"/>
    </location>
    <ligand>
        <name>NAD(+)</name>
        <dbReference type="ChEBI" id="CHEBI:57540"/>
    </ligand>
</feature>
<feature type="binding site" evidence="1">
    <location>
        <position position="246"/>
    </location>
    <ligand>
        <name>a divalent metal cation</name>
        <dbReference type="ChEBI" id="CHEBI:60240"/>
    </ligand>
</feature>
<feature type="binding site" evidence="1">
    <location>
        <position position="247"/>
    </location>
    <ligand>
        <name>a divalent metal cation</name>
        <dbReference type="ChEBI" id="CHEBI:60240"/>
    </ligand>
</feature>
<feature type="binding site" evidence="1">
    <location>
        <position position="270"/>
    </location>
    <ligand>
        <name>a divalent metal cation</name>
        <dbReference type="ChEBI" id="CHEBI:60240"/>
    </ligand>
</feature>
<feature type="binding site" evidence="1">
    <location>
        <position position="270"/>
    </location>
    <ligand>
        <name>NAD(+)</name>
        <dbReference type="ChEBI" id="CHEBI:57540"/>
    </ligand>
</feature>
<feature type="binding site" evidence="1">
    <location>
        <position position="418"/>
    </location>
    <ligand>
        <name>NAD(+)</name>
        <dbReference type="ChEBI" id="CHEBI:57540"/>
    </ligand>
</feature>
<feature type="site" description="Important for activity" evidence="1">
    <location>
        <position position="270"/>
    </location>
</feature>
<evidence type="ECO:0000255" key="1">
    <source>
        <dbReference type="HAMAP-Rule" id="MF_01619"/>
    </source>
</evidence>
<protein>
    <recommendedName>
        <fullName evidence="1">NAD-dependent malic enzyme</fullName>
        <shortName evidence="1">NAD-ME</shortName>
        <ecNumber evidence="1">1.1.1.38</ecNumber>
    </recommendedName>
</protein>
<accession>B1IRX9</accession>